<sequence>MAVTVVNHPLVKHKLGILRQHDVPVSEFRAISNEICRLLTYEATKDLETEKVTIQGWAGPVEVDQIRGKKITVVPILRAGLGMLDGLLDMIPGAKVSVVGMFRNEETLEPVKYYVKLAKNIEERMAIIIDPMLATGGTLNATIDLLKEAGCPQIKGLFLVAAPEGIKKVVDRHPDVDIYVAAVDERLNEHGYILPGLGDAGDKIFGTK</sequence>
<name>UPP_NITV9</name>
<gene>
    <name evidence="1" type="primary">upp</name>
    <name type="ordered locus">DvMF_0911</name>
</gene>
<proteinExistence type="inferred from homology"/>
<feature type="chain" id="PRO_1000139114" description="Uracil phosphoribosyltransferase">
    <location>
        <begin position="1"/>
        <end position="208"/>
    </location>
</feature>
<feature type="binding site" evidence="1">
    <location>
        <position position="78"/>
    </location>
    <ligand>
        <name>5-phospho-alpha-D-ribose 1-diphosphate</name>
        <dbReference type="ChEBI" id="CHEBI:58017"/>
    </ligand>
</feature>
<feature type="binding site" evidence="1">
    <location>
        <position position="103"/>
    </location>
    <ligand>
        <name>5-phospho-alpha-D-ribose 1-diphosphate</name>
        <dbReference type="ChEBI" id="CHEBI:58017"/>
    </ligand>
</feature>
<feature type="binding site" evidence="1">
    <location>
        <begin position="130"/>
        <end position="138"/>
    </location>
    <ligand>
        <name>5-phospho-alpha-D-ribose 1-diphosphate</name>
        <dbReference type="ChEBI" id="CHEBI:58017"/>
    </ligand>
</feature>
<feature type="binding site" evidence="1">
    <location>
        <position position="193"/>
    </location>
    <ligand>
        <name>uracil</name>
        <dbReference type="ChEBI" id="CHEBI:17568"/>
    </ligand>
</feature>
<feature type="binding site" evidence="1">
    <location>
        <begin position="198"/>
        <end position="200"/>
    </location>
    <ligand>
        <name>uracil</name>
        <dbReference type="ChEBI" id="CHEBI:17568"/>
    </ligand>
</feature>
<feature type="binding site" evidence="1">
    <location>
        <position position="199"/>
    </location>
    <ligand>
        <name>5-phospho-alpha-D-ribose 1-diphosphate</name>
        <dbReference type="ChEBI" id="CHEBI:58017"/>
    </ligand>
</feature>
<reference key="1">
    <citation type="submission" date="2008-10" db="EMBL/GenBank/DDBJ databases">
        <title>Complete sequence of Desulfovibrio vulgaris str. 'Miyazaki F'.</title>
        <authorList>
            <person name="Lucas S."/>
            <person name="Copeland A."/>
            <person name="Lapidus A."/>
            <person name="Glavina del Rio T."/>
            <person name="Dalin E."/>
            <person name="Tice H."/>
            <person name="Bruce D."/>
            <person name="Goodwin L."/>
            <person name="Pitluck S."/>
            <person name="Sims D."/>
            <person name="Brettin T."/>
            <person name="Detter J.C."/>
            <person name="Han C."/>
            <person name="Larimer F."/>
            <person name="Land M."/>
            <person name="Hauser L."/>
            <person name="Kyrpides N."/>
            <person name="Mikhailova N."/>
            <person name="Hazen T.C."/>
            <person name="Richardson P."/>
        </authorList>
    </citation>
    <scope>NUCLEOTIDE SEQUENCE [LARGE SCALE GENOMIC DNA]</scope>
    <source>
        <strain>DSM 19637 / Miyazaki F</strain>
    </source>
</reference>
<dbReference type="EC" id="2.4.2.9" evidence="1"/>
<dbReference type="EMBL" id="CP001197">
    <property type="protein sequence ID" value="ACL07866.1"/>
    <property type="molecule type" value="Genomic_DNA"/>
</dbReference>
<dbReference type="SMR" id="B8DP34"/>
<dbReference type="STRING" id="883.DvMF_0911"/>
<dbReference type="KEGG" id="dvm:DvMF_0911"/>
<dbReference type="eggNOG" id="COG0035">
    <property type="taxonomic scope" value="Bacteria"/>
</dbReference>
<dbReference type="HOGENOM" id="CLU_067096_2_2_7"/>
<dbReference type="OrthoDB" id="9781675at2"/>
<dbReference type="UniPathway" id="UPA00574">
    <property type="reaction ID" value="UER00636"/>
</dbReference>
<dbReference type="GO" id="GO:0005525">
    <property type="term" value="F:GTP binding"/>
    <property type="evidence" value="ECO:0007669"/>
    <property type="project" value="UniProtKB-KW"/>
</dbReference>
<dbReference type="GO" id="GO:0000287">
    <property type="term" value="F:magnesium ion binding"/>
    <property type="evidence" value="ECO:0007669"/>
    <property type="project" value="UniProtKB-UniRule"/>
</dbReference>
<dbReference type="GO" id="GO:0004845">
    <property type="term" value="F:uracil phosphoribosyltransferase activity"/>
    <property type="evidence" value="ECO:0007669"/>
    <property type="project" value="UniProtKB-UniRule"/>
</dbReference>
<dbReference type="GO" id="GO:0044206">
    <property type="term" value="P:UMP salvage"/>
    <property type="evidence" value="ECO:0007669"/>
    <property type="project" value="UniProtKB-UniRule"/>
</dbReference>
<dbReference type="GO" id="GO:0006223">
    <property type="term" value="P:uracil salvage"/>
    <property type="evidence" value="ECO:0007669"/>
    <property type="project" value="InterPro"/>
</dbReference>
<dbReference type="CDD" id="cd06223">
    <property type="entry name" value="PRTases_typeI"/>
    <property type="match status" value="1"/>
</dbReference>
<dbReference type="FunFam" id="3.40.50.2020:FF:000003">
    <property type="entry name" value="Uracil phosphoribosyltransferase"/>
    <property type="match status" value="1"/>
</dbReference>
<dbReference type="Gene3D" id="3.40.50.2020">
    <property type="match status" value="1"/>
</dbReference>
<dbReference type="HAMAP" id="MF_01218_B">
    <property type="entry name" value="Upp_B"/>
    <property type="match status" value="1"/>
</dbReference>
<dbReference type="InterPro" id="IPR000836">
    <property type="entry name" value="PRibTrfase_dom"/>
</dbReference>
<dbReference type="InterPro" id="IPR029057">
    <property type="entry name" value="PRTase-like"/>
</dbReference>
<dbReference type="InterPro" id="IPR034332">
    <property type="entry name" value="Upp_B"/>
</dbReference>
<dbReference type="InterPro" id="IPR050054">
    <property type="entry name" value="UPRTase/APRTase"/>
</dbReference>
<dbReference type="InterPro" id="IPR005765">
    <property type="entry name" value="Ura_phspho_trans"/>
</dbReference>
<dbReference type="NCBIfam" id="NF001097">
    <property type="entry name" value="PRK00129.1"/>
    <property type="match status" value="1"/>
</dbReference>
<dbReference type="NCBIfam" id="TIGR01091">
    <property type="entry name" value="upp"/>
    <property type="match status" value="1"/>
</dbReference>
<dbReference type="PANTHER" id="PTHR32315">
    <property type="entry name" value="ADENINE PHOSPHORIBOSYLTRANSFERASE"/>
    <property type="match status" value="1"/>
</dbReference>
<dbReference type="PANTHER" id="PTHR32315:SF4">
    <property type="entry name" value="URACIL PHOSPHORIBOSYLTRANSFERASE, CHLOROPLASTIC"/>
    <property type="match status" value="1"/>
</dbReference>
<dbReference type="Pfam" id="PF14681">
    <property type="entry name" value="UPRTase"/>
    <property type="match status" value="1"/>
</dbReference>
<dbReference type="SUPFAM" id="SSF53271">
    <property type="entry name" value="PRTase-like"/>
    <property type="match status" value="1"/>
</dbReference>
<organism>
    <name type="scientific">Nitratidesulfovibrio vulgaris (strain DSM 19637 / Miyazaki F)</name>
    <name type="common">Desulfovibrio vulgaris</name>
    <dbReference type="NCBI Taxonomy" id="883"/>
    <lineage>
        <taxon>Bacteria</taxon>
        <taxon>Pseudomonadati</taxon>
        <taxon>Thermodesulfobacteriota</taxon>
        <taxon>Desulfovibrionia</taxon>
        <taxon>Desulfovibrionales</taxon>
        <taxon>Desulfovibrionaceae</taxon>
        <taxon>Nitratidesulfovibrio</taxon>
    </lineage>
</organism>
<protein>
    <recommendedName>
        <fullName evidence="1">Uracil phosphoribosyltransferase</fullName>
        <ecNumber evidence="1">2.4.2.9</ecNumber>
    </recommendedName>
    <alternativeName>
        <fullName evidence="1">UMP pyrophosphorylase</fullName>
    </alternativeName>
    <alternativeName>
        <fullName evidence="1">UPRTase</fullName>
    </alternativeName>
</protein>
<evidence type="ECO:0000255" key="1">
    <source>
        <dbReference type="HAMAP-Rule" id="MF_01218"/>
    </source>
</evidence>
<comment type="function">
    <text evidence="1">Catalyzes the conversion of uracil and 5-phospho-alpha-D-ribose 1-diphosphate (PRPP) to UMP and diphosphate.</text>
</comment>
<comment type="catalytic activity">
    <reaction evidence="1">
        <text>UMP + diphosphate = 5-phospho-alpha-D-ribose 1-diphosphate + uracil</text>
        <dbReference type="Rhea" id="RHEA:13017"/>
        <dbReference type="ChEBI" id="CHEBI:17568"/>
        <dbReference type="ChEBI" id="CHEBI:33019"/>
        <dbReference type="ChEBI" id="CHEBI:57865"/>
        <dbReference type="ChEBI" id="CHEBI:58017"/>
        <dbReference type="EC" id="2.4.2.9"/>
    </reaction>
</comment>
<comment type="cofactor">
    <cofactor evidence="1">
        <name>Mg(2+)</name>
        <dbReference type="ChEBI" id="CHEBI:18420"/>
    </cofactor>
    <text evidence="1">Binds 1 Mg(2+) ion per subunit. The magnesium is bound as Mg-PRPP.</text>
</comment>
<comment type="activity regulation">
    <text evidence="1">Allosterically activated by GTP.</text>
</comment>
<comment type="pathway">
    <text evidence="1">Pyrimidine metabolism; UMP biosynthesis via salvage pathway; UMP from uracil: step 1/1.</text>
</comment>
<comment type="similarity">
    <text evidence="1">Belongs to the UPRTase family.</text>
</comment>
<keyword id="KW-0021">Allosteric enzyme</keyword>
<keyword id="KW-0328">Glycosyltransferase</keyword>
<keyword id="KW-0342">GTP-binding</keyword>
<keyword id="KW-0460">Magnesium</keyword>
<keyword id="KW-0547">Nucleotide-binding</keyword>
<keyword id="KW-0808">Transferase</keyword>
<accession>B8DP34</accession>